<comment type="function">
    <text evidence="1">Catalyzes the reversible transfer of the terminal phosphate group between ATP and AMP. Plays an important role in cellular energy homeostasis and in adenine nucleotide metabolism.</text>
</comment>
<comment type="catalytic activity">
    <reaction evidence="1">
        <text>AMP + ATP = 2 ADP</text>
        <dbReference type="Rhea" id="RHEA:12973"/>
        <dbReference type="ChEBI" id="CHEBI:30616"/>
        <dbReference type="ChEBI" id="CHEBI:456215"/>
        <dbReference type="ChEBI" id="CHEBI:456216"/>
        <dbReference type="EC" id="2.7.4.3"/>
    </reaction>
</comment>
<comment type="pathway">
    <text evidence="1">Purine metabolism; AMP biosynthesis via salvage pathway; AMP from ADP: step 1/1.</text>
</comment>
<comment type="subunit">
    <text evidence="1">Monomer.</text>
</comment>
<comment type="subcellular location">
    <subcellularLocation>
        <location evidence="1">Cytoplasm</location>
    </subcellularLocation>
</comment>
<comment type="domain">
    <text evidence="1">Consists of three domains, a large central CORE domain and two small peripheral domains, NMPbind and LID, which undergo movements during catalysis. The LID domain closes over the site of phosphoryl transfer upon ATP binding. Assembling and dissambling the active center during each catalytic cycle provides an effective means to prevent ATP hydrolysis. Some bacteria have evolved a zinc-coordinating structure that stabilizes the LID domain.</text>
</comment>
<comment type="similarity">
    <text evidence="1">Belongs to the adenylate kinase family.</text>
</comment>
<keyword id="KW-0067">ATP-binding</keyword>
<keyword id="KW-0963">Cytoplasm</keyword>
<keyword id="KW-0418">Kinase</keyword>
<keyword id="KW-0479">Metal-binding</keyword>
<keyword id="KW-0545">Nucleotide biosynthesis</keyword>
<keyword id="KW-0547">Nucleotide-binding</keyword>
<keyword id="KW-1185">Reference proteome</keyword>
<keyword id="KW-0808">Transferase</keyword>
<keyword id="KW-0862">Zinc</keyword>
<dbReference type="EC" id="2.7.4.3" evidence="1"/>
<dbReference type="EMBL" id="AE017226">
    <property type="protein sequence ID" value="AAS11601.1"/>
    <property type="molecule type" value="Genomic_DNA"/>
</dbReference>
<dbReference type="RefSeq" id="NP_971720.1">
    <property type="nucleotide sequence ID" value="NC_002967.9"/>
</dbReference>
<dbReference type="RefSeq" id="WP_002670667.1">
    <property type="nucleotide sequence ID" value="NC_002967.9"/>
</dbReference>
<dbReference type="SMR" id="Q73NP0"/>
<dbReference type="STRING" id="243275.TDE_1112"/>
<dbReference type="PaxDb" id="243275-TDE_1112"/>
<dbReference type="GeneID" id="2739528"/>
<dbReference type="KEGG" id="tde:TDE_1112"/>
<dbReference type="PATRIC" id="fig|243275.7.peg.1072"/>
<dbReference type="eggNOG" id="COG0563">
    <property type="taxonomic scope" value="Bacteria"/>
</dbReference>
<dbReference type="HOGENOM" id="CLU_032354_1_1_12"/>
<dbReference type="OrthoDB" id="9805030at2"/>
<dbReference type="UniPathway" id="UPA00588">
    <property type="reaction ID" value="UER00649"/>
</dbReference>
<dbReference type="Proteomes" id="UP000008212">
    <property type="component" value="Chromosome"/>
</dbReference>
<dbReference type="GO" id="GO:0005737">
    <property type="term" value="C:cytoplasm"/>
    <property type="evidence" value="ECO:0007669"/>
    <property type="project" value="UniProtKB-SubCell"/>
</dbReference>
<dbReference type="GO" id="GO:0004017">
    <property type="term" value="F:adenylate kinase activity"/>
    <property type="evidence" value="ECO:0007669"/>
    <property type="project" value="UniProtKB-UniRule"/>
</dbReference>
<dbReference type="GO" id="GO:0005524">
    <property type="term" value="F:ATP binding"/>
    <property type="evidence" value="ECO:0007669"/>
    <property type="project" value="UniProtKB-UniRule"/>
</dbReference>
<dbReference type="GO" id="GO:0008270">
    <property type="term" value="F:zinc ion binding"/>
    <property type="evidence" value="ECO:0007669"/>
    <property type="project" value="UniProtKB-UniRule"/>
</dbReference>
<dbReference type="GO" id="GO:0044209">
    <property type="term" value="P:AMP salvage"/>
    <property type="evidence" value="ECO:0007669"/>
    <property type="project" value="UniProtKB-UniRule"/>
</dbReference>
<dbReference type="CDD" id="cd01428">
    <property type="entry name" value="ADK"/>
    <property type="match status" value="1"/>
</dbReference>
<dbReference type="FunFam" id="3.40.50.300:FF:000106">
    <property type="entry name" value="Adenylate kinase mitochondrial"/>
    <property type="match status" value="1"/>
</dbReference>
<dbReference type="Gene3D" id="3.40.50.300">
    <property type="entry name" value="P-loop containing nucleotide triphosphate hydrolases"/>
    <property type="match status" value="1"/>
</dbReference>
<dbReference type="HAMAP" id="MF_00235">
    <property type="entry name" value="Adenylate_kinase_Adk"/>
    <property type="match status" value="1"/>
</dbReference>
<dbReference type="InterPro" id="IPR006259">
    <property type="entry name" value="Adenyl_kin_sub"/>
</dbReference>
<dbReference type="InterPro" id="IPR000850">
    <property type="entry name" value="Adenylat/UMP-CMP_kin"/>
</dbReference>
<dbReference type="InterPro" id="IPR033690">
    <property type="entry name" value="Adenylat_kinase_CS"/>
</dbReference>
<dbReference type="InterPro" id="IPR007862">
    <property type="entry name" value="Adenylate_kinase_lid-dom"/>
</dbReference>
<dbReference type="InterPro" id="IPR027417">
    <property type="entry name" value="P-loop_NTPase"/>
</dbReference>
<dbReference type="NCBIfam" id="TIGR01351">
    <property type="entry name" value="adk"/>
    <property type="match status" value="1"/>
</dbReference>
<dbReference type="NCBIfam" id="NF001380">
    <property type="entry name" value="PRK00279.1-2"/>
    <property type="match status" value="1"/>
</dbReference>
<dbReference type="NCBIfam" id="NF001381">
    <property type="entry name" value="PRK00279.1-3"/>
    <property type="match status" value="1"/>
</dbReference>
<dbReference type="PANTHER" id="PTHR23359">
    <property type="entry name" value="NUCLEOTIDE KINASE"/>
    <property type="match status" value="1"/>
</dbReference>
<dbReference type="Pfam" id="PF00406">
    <property type="entry name" value="ADK"/>
    <property type="match status" value="1"/>
</dbReference>
<dbReference type="Pfam" id="PF05191">
    <property type="entry name" value="ADK_lid"/>
    <property type="match status" value="1"/>
</dbReference>
<dbReference type="PRINTS" id="PR00094">
    <property type="entry name" value="ADENYLTKNASE"/>
</dbReference>
<dbReference type="SUPFAM" id="SSF52540">
    <property type="entry name" value="P-loop containing nucleoside triphosphate hydrolases"/>
    <property type="match status" value="1"/>
</dbReference>
<dbReference type="PROSITE" id="PS00113">
    <property type="entry name" value="ADENYLATE_KINASE"/>
    <property type="match status" value="1"/>
</dbReference>
<protein>
    <recommendedName>
        <fullName evidence="1">Adenylate kinase</fullName>
        <shortName evidence="1">AK</shortName>
        <ecNumber evidence="1">2.7.4.3</ecNumber>
    </recommendedName>
    <alternativeName>
        <fullName evidence="1">ATP-AMP transphosphorylase</fullName>
    </alternativeName>
    <alternativeName>
        <fullName evidence="1">ATP:AMP phosphotransferase</fullName>
    </alternativeName>
    <alternativeName>
        <fullName evidence="1">Adenylate monophosphate kinase</fullName>
    </alternativeName>
</protein>
<sequence>MNCIFLGPPGAGKGTLAFEVSKSYKIPHISTGDLFRAAIKEQTDLGKKVKAVIDSGALVSDDLTIALVKERLERDDTKKGFILDGFPRTIAQADALEDIVKIDSVINFDISDDEVIKRLSGRRVCSSCGQSFHIEFVKPKKEGICDSCSGDLMIRPDDKIEAIQKRLETYRNQTAPLIDYYTKKDLIVNIDARPASEKVLASFKVKFPH</sequence>
<feature type="chain" id="PRO_0000158877" description="Adenylate kinase">
    <location>
        <begin position="1"/>
        <end position="209"/>
    </location>
</feature>
<feature type="region of interest" description="NMP" evidence="1">
    <location>
        <begin position="30"/>
        <end position="59"/>
    </location>
</feature>
<feature type="region of interest" description="LID" evidence="1">
    <location>
        <begin position="121"/>
        <end position="158"/>
    </location>
</feature>
<feature type="binding site" evidence="1">
    <location>
        <begin position="10"/>
        <end position="15"/>
    </location>
    <ligand>
        <name>ATP</name>
        <dbReference type="ChEBI" id="CHEBI:30616"/>
    </ligand>
</feature>
<feature type="binding site" evidence="1">
    <location>
        <position position="31"/>
    </location>
    <ligand>
        <name>AMP</name>
        <dbReference type="ChEBI" id="CHEBI:456215"/>
    </ligand>
</feature>
<feature type="binding site" evidence="1">
    <location>
        <position position="36"/>
    </location>
    <ligand>
        <name>AMP</name>
        <dbReference type="ChEBI" id="CHEBI:456215"/>
    </ligand>
</feature>
<feature type="binding site" evidence="1">
    <location>
        <begin position="57"/>
        <end position="59"/>
    </location>
    <ligand>
        <name>AMP</name>
        <dbReference type="ChEBI" id="CHEBI:456215"/>
    </ligand>
</feature>
<feature type="binding site" evidence="1">
    <location>
        <begin position="85"/>
        <end position="88"/>
    </location>
    <ligand>
        <name>AMP</name>
        <dbReference type="ChEBI" id="CHEBI:456215"/>
    </ligand>
</feature>
<feature type="binding site" evidence="1">
    <location>
        <position position="92"/>
    </location>
    <ligand>
        <name>AMP</name>
        <dbReference type="ChEBI" id="CHEBI:456215"/>
    </ligand>
</feature>
<feature type="binding site" evidence="1">
    <location>
        <position position="122"/>
    </location>
    <ligand>
        <name>ATP</name>
        <dbReference type="ChEBI" id="CHEBI:30616"/>
    </ligand>
</feature>
<feature type="binding site" evidence="1">
    <location>
        <position position="125"/>
    </location>
    <ligand>
        <name>Zn(2+)</name>
        <dbReference type="ChEBI" id="CHEBI:29105"/>
        <note>structural</note>
    </ligand>
</feature>
<feature type="binding site" evidence="1">
    <location>
        <position position="128"/>
    </location>
    <ligand>
        <name>Zn(2+)</name>
        <dbReference type="ChEBI" id="CHEBI:29105"/>
        <note>structural</note>
    </ligand>
</feature>
<feature type="binding site" evidence="1">
    <location>
        <begin position="131"/>
        <end position="132"/>
    </location>
    <ligand>
        <name>ATP</name>
        <dbReference type="ChEBI" id="CHEBI:30616"/>
    </ligand>
</feature>
<feature type="binding site" evidence="1">
    <location>
        <position position="145"/>
    </location>
    <ligand>
        <name>Zn(2+)</name>
        <dbReference type="ChEBI" id="CHEBI:29105"/>
        <note>structural</note>
    </ligand>
</feature>
<feature type="binding site" evidence="1">
    <location>
        <position position="148"/>
    </location>
    <ligand>
        <name>Zn(2+)</name>
        <dbReference type="ChEBI" id="CHEBI:29105"/>
        <note>structural</note>
    </ligand>
</feature>
<feature type="binding site" evidence="1">
    <location>
        <position position="155"/>
    </location>
    <ligand>
        <name>AMP</name>
        <dbReference type="ChEBI" id="CHEBI:456215"/>
    </ligand>
</feature>
<feature type="binding site" evidence="1">
    <location>
        <position position="166"/>
    </location>
    <ligand>
        <name>AMP</name>
        <dbReference type="ChEBI" id="CHEBI:456215"/>
    </ligand>
</feature>
<feature type="binding site" evidence="1">
    <location>
        <position position="194"/>
    </location>
    <ligand>
        <name>ATP</name>
        <dbReference type="ChEBI" id="CHEBI:30616"/>
    </ligand>
</feature>
<accession>Q73NP0</accession>
<evidence type="ECO:0000255" key="1">
    <source>
        <dbReference type="HAMAP-Rule" id="MF_00235"/>
    </source>
</evidence>
<organism>
    <name type="scientific">Treponema denticola (strain ATCC 35405 / DSM 14222 / CIP 103919 / JCM 8153 / KCTC 15104)</name>
    <dbReference type="NCBI Taxonomy" id="243275"/>
    <lineage>
        <taxon>Bacteria</taxon>
        <taxon>Pseudomonadati</taxon>
        <taxon>Spirochaetota</taxon>
        <taxon>Spirochaetia</taxon>
        <taxon>Spirochaetales</taxon>
        <taxon>Treponemataceae</taxon>
        <taxon>Treponema</taxon>
    </lineage>
</organism>
<gene>
    <name evidence="1" type="primary">adk</name>
    <name type="ordered locus">TDE_1112</name>
</gene>
<proteinExistence type="inferred from homology"/>
<reference key="1">
    <citation type="journal article" date="2004" name="Proc. Natl. Acad. Sci. U.S.A.">
        <title>Comparison of the genome of the oral pathogen Treponema denticola with other spirochete genomes.</title>
        <authorList>
            <person name="Seshadri R."/>
            <person name="Myers G.S.A."/>
            <person name="Tettelin H."/>
            <person name="Eisen J.A."/>
            <person name="Heidelberg J.F."/>
            <person name="Dodson R.J."/>
            <person name="Davidsen T.M."/>
            <person name="DeBoy R.T."/>
            <person name="Fouts D.E."/>
            <person name="Haft D.H."/>
            <person name="Selengut J."/>
            <person name="Ren Q."/>
            <person name="Brinkac L.M."/>
            <person name="Madupu R."/>
            <person name="Kolonay J.F."/>
            <person name="Durkin S.A."/>
            <person name="Daugherty S.C."/>
            <person name="Shetty J."/>
            <person name="Shvartsbeyn A."/>
            <person name="Gebregeorgis E."/>
            <person name="Geer K."/>
            <person name="Tsegaye G."/>
            <person name="Malek J.A."/>
            <person name="Ayodeji B."/>
            <person name="Shatsman S."/>
            <person name="McLeod M.P."/>
            <person name="Smajs D."/>
            <person name="Howell J.K."/>
            <person name="Pal S."/>
            <person name="Amin A."/>
            <person name="Vashisth P."/>
            <person name="McNeill T.Z."/>
            <person name="Xiang Q."/>
            <person name="Sodergren E."/>
            <person name="Baca E."/>
            <person name="Weinstock G.M."/>
            <person name="Norris S.J."/>
            <person name="Fraser C.M."/>
            <person name="Paulsen I.T."/>
        </authorList>
    </citation>
    <scope>NUCLEOTIDE SEQUENCE [LARGE SCALE GENOMIC DNA]</scope>
    <source>
        <strain>ATCC 35405 / DSM 14222 / CIP 103919 / JCM 8153 / KCTC 15104</strain>
    </source>
</reference>
<name>KAD_TREDE</name>